<proteinExistence type="inferred from homology"/>
<keyword id="KW-0067">ATP-binding</keyword>
<keyword id="KW-1003">Cell membrane</keyword>
<keyword id="KW-0472">Membrane</keyword>
<keyword id="KW-0547">Nucleotide-binding</keyword>
<keyword id="KW-0592">Phosphate transport</keyword>
<keyword id="KW-1185">Reference proteome</keyword>
<keyword id="KW-1278">Translocase</keyword>
<keyword id="KW-0813">Transport</keyword>
<comment type="function">
    <text evidence="1">Part of the ABC transporter complex PstSACB involved in phosphate import. Responsible for energy coupling to the transport system.</text>
</comment>
<comment type="catalytic activity">
    <reaction evidence="1">
        <text>phosphate(out) + ATP + H2O = ADP + 2 phosphate(in) + H(+)</text>
        <dbReference type="Rhea" id="RHEA:24440"/>
        <dbReference type="ChEBI" id="CHEBI:15377"/>
        <dbReference type="ChEBI" id="CHEBI:15378"/>
        <dbReference type="ChEBI" id="CHEBI:30616"/>
        <dbReference type="ChEBI" id="CHEBI:43474"/>
        <dbReference type="ChEBI" id="CHEBI:456216"/>
        <dbReference type="EC" id="7.3.2.1"/>
    </reaction>
</comment>
<comment type="subunit">
    <text evidence="1">The complex is composed of two ATP-binding proteins (PstB), two transmembrane proteins (PstC and PstA) and a solute-binding protein (PstS).</text>
</comment>
<comment type="subcellular location">
    <subcellularLocation>
        <location evidence="1">Cell membrane</location>
        <topology evidence="1">Peripheral membrane protein</topology>
    </subcellularLocation>
</comment>
<comment type="similarity">
    <text evidence="1">Belongs to the ABC transporter superfamily. Phosphate importer (TC 3.A.1.7) family.</text>
</comment>
<organism>
    <name type="scientific">Lactiplantibacillus plantarum (strain ATCC BAA-793 / NCIMB 8826 / WCFS1)</name>
    <name type="common">Lactobacillus plantarum</name>
    <dbReference type="NCBI Taxonomy" id="220668"/>
    <lineage>
        <taxon>Bacteria</taxon>
        <taxon>Bacillati</taxon>
        <taxon>Bacillota</taxon>
        <taxon>Bacilli</taxon>
        <taxon>Lactobacillales</taxon>
        <taxon>Lactobacillaceae</taxon>
        <taxon>Lactiplantibacillus</taxon>
    </lineage>
</organism>
<evidence type="ECO:0000255" key="1">
    <source>
        <dbReference type="HAMAP-Rule" id="MF_01702"/>
    </source>
</evidence>
<reference key="1">
    <citation type="journal article" date="2003" name="Proc. Natl. Acad. Sci. U.S.A.">
        <title>Complete genome sequence of Lactobacillus plantarum WCFS1.</title>
        <authorList>
            <person name="Kleerebezem M."/>
            <person name="Boekhorst J."/>
            <person name="van Kranenburg R."/>
            <person name="Molenaar D."/>
            <person name="Kuipers O.P."/>
            <person name="Leer R."/>
            <person name="Tarchini R."/>
            <person name="Peters S.A."/>
            <person name="Sandbrink H.M."/>
            <person name="Fiers M.W.E.J."/>
            <person name="Stiekema W."/>
            <person name="Klein Lankhorst R.M."/>
            <person name="Bron P.A."/>
            <person name="Hoffer S.M."/>
            <person name="Nierop Groot M.N."/>
            <person name="Kerkhoven R."/>
            <person name="De Vries M."/>
            <person name="Ursing B."/>
            <person name="De Vos W.M."/>
            <person name="Siezen R.J."/>
        </authorList>
    </citation>
    <scope>NUCLEOTIDE SEQUENCE [LARGE SCALE GENOMIC DNA]</scope>
    <source>
        <strain>ATCC BAA-793 / NCIMB 8826 / WCFS1</strain>
    </source>
</reference>
<reference key="2">
    <citation type="journal article" date="2012" name="J. Bacteriol.">
        <title>Complete resequencing and reannotation of the Lactobacillus plantarum WCFS1 genome.</title>
        <authorList>
            <person name="Siezen R.J."/>
            <person name="Francke C."/>
            <person name="Renckens B."/>
            <person name="Boekhorst J."/>
            <person name="Wels M."/>
            <person name="Kleerebezem M."/>
            <person name="van Hijum S.A."/>
        </authorList>
    </citation>
    <scope>NUCLEOTIDE SEQUENCE [LARGE SCALE GENOMIC DNA]</scope>
    <scope>GENOME REANNOTATION</scope>
    <source>
        <strain>ATCC BAA-793 / NCIMB 8826 / WCFS1</strain>
    </source>
</reference>
<feature type="chain" id="PRO_0000092827" description="Phosphate import ATP-binding protein PstB 2">
    <location>
        <begin position="1"/>
        <end position="251"/>
    </location>
</feature>
<feature type="domain" description="ABC transporter" evidence="1">
    <location>
        <begin position="5"/>
        <end position="246"/>
    </location>
</feature>
<feature type="binding site" evidence="1">
    <location>
        <begin position="37"/>
        <end position="44"/>
    </location>
    <ligand>
        <name>ATP</name>
        <dbReference type="ChEBI" id="CHEBI:30616"/>
    </ligand>
</feature>
<protein>
    <recommendedName>
        <fullName evidence="1">Phosphate import ATP-binding protein PstB 2</fullName>
        <ecNumber evidence="1">7.3.2.1</ecNumber>
    </recommendedName>
    <alternativeName>
        <fullName evidence="1">ABC phosphate transporter 2</fullName>
    </alternativeName>
    <alternativeName>
        <fullName evidence="1">Phosphate-transporting ATPase 2</fullName>
    </alternativeName>
</protein>
<accession>Q88YK7</accession>
<accession>F9ULX7</accession>
<dbReference type="EC" id="7.3.2.1" evidence="1"/>
<dbReference type="EMBL" id="AL935263">
    <property type="protein sequence ID" value="CCC78216.1"/>
    <property type="molecule type" value="Genomic_DNA"/>
</dbReference>
<dbReference type="RefSeq" id="YP_004888730.1">
    <property type="nucleotide sequence ID" value="NC_004567.2"/>
</dbReference>
<dbReference type="SMR" id="Q88YK7"/>
<dbReference type="STRING" id="220668.lp_0750"/>
<dbReference type="EnsemblBacteria" id="CCC78216">
    <property type="protein sequence ID" value="CCC78216"/>
    <property type="gene ID" value="lp_0750"/>
</dbReference>
<dbReference type="KEGG" id="lpl:lp_0750"/>
<dbReference type="PATRIC" id="fig|220668.9.peg.631"/>
<dbReference type="eggNOG" id="COG1117">
    <property type="taxonomic scope" value="Bacteria"/>
</dbReference>
<dbReference type="HOGENOM" id="CLU_000604_1_22_9"/>
<dbReference type="OrthoDB" id="9802185at2"/>
<dbReference type="PhylomeDB" id="Q88YK7"/>
<dbReference type="Proteomes" id="UP000000432">
    <property type="component" value="Chromosome"/>
</dbReference>
<dbReference type="GO" id="GO:0005886">
    <property type="term" value="C:plasma membrane"/>
    <property type="evidence" value="ECO:0007669"/>
    <property type="project" value="UniProtKB-SubCell"/>
</dbReference>
<dbReference type="GO" id="GO:0005524">
    <property type="term" value="F:ATP binding"/>
    <property type="evidence" value="ECO:0007669"/>
    <property type="project" value="UniProtKB-KW"/>
</dbReference>
<dbReference type="GO" id="GO:0016887">
    <property type="term" value="F:ATP hydrolysis activity"/>
    <property type="evidence" value="ECO:0007669"/>
    <property type="project" value="InterPro"/>
</dbReference>
<dbReference type="GO" id="GO:0015415">
    <property type="term" value="F:ATPase-coupled phosphate ion transmembrane transporter activity"/>
    <property type="evidence" value="ECO:0007669"/>
    <property type="project" value="UniProtKB-EC"/>
</dbReference>
<dbReference type="GO" id="GO:0035435">
    <property type="term" value="P:phosphate ion transmembrane transport"/>
    <property type="evidence" value="ECO:0007669"/>
    <property type="project" value="InterPro"/>
</dbReference>
<dbReference type="CDD" id="cd03260">
    <property type="entry name" value="ABC_PstB_phosphate_transporter"/>
    <property type="match status" value="1"/>
</dbReference>
<dbReference type="Gene3D" id="3.40.50.300">
    <property type="entry name" value="P-loop containing nucleotide triphosphate hydrolases"/>
    <property type="match status" value="1"/>
</dbReference>
<dbReference type="InterPro" id="IPR003593">
    <property type="entry name" value="AAA+_ATPase"/>
</dbReference>
<dbReference type="InterPro" id="IPR003439">
    <property type="entry name" value="ABC_transporter-like_ATP-bd"/>
</dbReference>
<dbReference type="InterPro" id="IPR017871">
    <property type="entry name" value="ABC_transporter-like_CS"/>
</dbReference>
<dbReference type="InterPro" id="IPR027417">
    <property type="entry name" value="P-loop_NTPase"/>
</dbReference>
<dbReference type="InterPro" id="IPR005670">
    <property type="entry name" value="PstB-like"/>
</dbReference>
<dbReference type="NCBIfam" id="TIGR00972">
    <property type="entry name" value="3a0107s01c2"/>
    <property type="match status" value="1"/>
</dbReference>
<dbReference type="PANTHER" id="PTHR43423">
    <property type="entry name" value="ABC TRANSPORTER I FAMILY MEMBER 17"/>
    <property type="match status" value="1"/>
</dbReference>
<dbReference type="PANTHER" id="PTHR43423:SF1">
    <property type="entry name" value="ABC TRANSPORTER I FAMILY MEMBER 17"/>
    <property type="match status" value="1"/>
</dbReference>
<dbReference type="Pfam" id="PF00005">
    <property type="entry name" value="ABC_tran"/>
    <property type="match status" value="1"/>
</dbReference>
<dbReference type="SMART" id="SM00382">
    <property type="entry name" value="AAA"/>
    <property type="match status" value="1"/>
</dbReference>
<dbReference type="SUPFAM" id="SSF52540">
    <property type="entry name" value="P-loop containing nucleoside triphosphate hydrolases"/>
    <property type="match status" value="1"/>
</dbReference>
<dbReference type="PROSITE" id="PS00211">
    <property type="entry name" value="ABC_TRANSPORTER_1"/>
    <property type="match status" value="1"/>
</dbReference>
<dbReference type="PROSITE" id="PS50893">
    <property type="entry name" value="ABC_TRANSPORTER_2"/>
    <property type="match status" value="1"/>
</dbReference>
<dbReference type="PROSITE" id="PS51238">
    <property type="entry name" value="PSTB"/>
    <property type="match status" value="1"/>
</dbReference>
<name>PSTB2_LACPL</name>
<gene>
    <name evidence="1" type="primary">pstB2</name>
    <name type="ordered locus">lp_0750</name>
</gene>
<sequence length="251" mass="28054">MSTILTTENLSLFYGKKEALKGINIDFDDKGITALIGPSGCGKSTFLRCLNRMNDLIPNVTITGEVNFNGHNIYAPTTDTVQLRKEIGMVFQQPNPFPFSIYENVIYGLRLAGVHDKERLDAAVEKSLKQAAIWDEVKDRLHANALSLSGGQQQRVCIARVLAVEPDIILLDEATSALDPISSRMIEETLLNLRQDYTIITVTHNMQQASRISDRTAFFLNGELIEVNDTKQIFMNPVKQETNDYISGRFG</sequence>